<keyword id="KW-0997">Cell inner membrane</keyword>
<keyword id="KW-1003">Cell membrane</keyword>
<keyword id="KW-0472">Membrane</keyword>
<keyword id="KW-1185">Reference proteome</keyword>
<accession>Q8YWK2</accession>
<proteinExistence type="inferred from homology"/>
<sequence>MKQIFIWLIKGYRMFISPLYPPTCRFRPTCSMYAIEAIERFGVFRGGWMAIRRILRCHPFHPGGYDPVPELGEHCCHHDSGNKG</sequence>
<comment type="function">
    <text evidence="1">Could be involved in insertion of integral membrane proteins into the membrane.</text>
</comment>
<comment type="subcellular location">
    <subcellularLocation>
        <location evidence="1">Cell inner membrane</location>
        <topology evidence="1">Peripheral membrane protein</topology>
        <orientation evidence="1">Cytoplasmic side</orientation>
    </subcellularLocation>
</comment>
<comment type="similarity">
    <text evidence="1">Belongs to the UPF0161 family.</text>
</comment>
<reference key="1">
    <citation type="journal article" date="2001" name="DNA Res.">
        <title>Complete genomic sequence of the filamentous nitrogen-fixing cyanobacterium Anabaena sp. strain PCC 7120.</title>
        <authorList>
            <person name="Kaneko T."/>
            <person name="Nakamura Y."/>
            <person name="Wolk C.P."/>
            <person name="Kuritz T."/>
            <person name="Sasamoto S."/>
            <person name="Watanabe A."/>
            <person name="Iriguchi M."/>
            <person name="Ishikawa A."/>
            <person name="Kawashima K."/>
            <person name="Kimura T."/>
            <person name="Kishida Y."/>
            <person name="Kohara M."/>
            <person name="Matsumoto M."/>
            <person name="Matsuno A."/>
            <person name="Muraki A."/>
            <person name="Nakazaki N."/>
            <person name="Shimpo S."/>
            <person name="Sugimoto M."/>
            <person name="Takazawa M."/>
            <person name="Yamada M."/>
            <person name="Yasuda M."/>
            <person name="Tabata S."/>
        </authorList>
    </citation>
    <scope>NUCLEOTIDE SEQUENCE [LARGE SCALE GENOMIC DNA]</scope>
    <source>
        <strain>PCC 7120 / SAG 25.82 / UTEX 2576</strain>
    </source>
</reference>
<protein>
    <recommendedName>
        <fullName evidence="1">Putative membrane protein insertion efficiency factor</fullName>
    </recommendedName>
</protein>
<dbReference type="EMBL" id="BA000019">
    <property type="protein sequence ID" value="BAB77977.1"/>
    <property type="molecule type" value="Genomic_DNA"/>
</dbReference>
<dbReference type="PIR" id="AE2007">
    <property type="entry name" value="AE2007"/>
</dbReference>
<dbReference type="STRING" id="103690.gene:10493628"/>
<dbReference type="KEGG" id="ana:asr1611"/>
<dbReference type="eggNOG" id="COG0759">
    <property type="taxonomic scope" value="Bacteria"/>
</dbReference>
<dbReference type="OrthoDB" id="9801753at2"/>
<dbReference type="Proteomes" id="UP000002483">
    <property type="component" value="Chromosome"/>
</dbReference>
<dbReference type="GO" id="GO:0005886">
    <property type="term" value="C:plasma membrane"/>
    <property type="evidence" value="ECO:0007669"/>
    <property type="project" value="UniProtKB-SubCell"/>
</dbReference>
<dbReference type="HAMAP" id="MF_00386">
    <property type="entry name" value="UPF0161_YidD"/>
    <property type="match status" value="1"/>
</dbReference>
<dbReference type="InterPro" id="IPR002696">
    <property type="entry name" value="Membr_insert_effic_factor_YidD"/>
</dbReference>
<dbReference type="NCBIfam" id="TIGR00278">
    <property type="entry name" value="membrane protein insertion efficiency factor YidD"/>
    <property type="match status" value="1"/>
</dbReference>
<dbReference type="PANTHER" id="PTHR33383">
    <property type="entry name" value="MEMBRANE PROTEIN INSERTION EFFICIENCY FACTOR-RELATED"/>
    <property type="match status" value="1"/>
</dbReference>
<dbReference type="PANTHER" id="PTHR33383:SF1">
    <property type="entry name" value="MEMBRANE PROTEIN INSERTION EFFICIENCY FACTOR-RELATED"/>
    <property type="match status" value="1"/>
</dbReference>
<dbReference type="Pfam" id="PF01809">
    <property type="entry name" value="YidD"/>
    <property type="match status" value="1"/>
</dbReference>
<dbReference type="SMART" id="SM01234">
    <property type="entry name" value="Haemolytic"/>
    <property type="match status" value="1"/>
</dbReference>
<organism>
    <name type="scientific">Nostoc sp. (strain PCC 7120 / SAG 25.82 / UTEX 2576)</name>
    <dbReference type="NCBI Taxonomy" id="103690"/>
    <lineage>
        <taxon>Bacteria</taxon>
        <taxon>Bacillati</taxon>
        <taxon>Cyanobacteriota</taxon>
        <taxon>Cyanophyceae</taxon>
        <taxon>Nostocales</taxon>
        <taxon>Nostocaceae</taxon>
        <taxon>Nostoc</taxon>
    </lineage>
</organism>
<gene>
    <name type="ordered locus">asr1611</name>
</gene>
<evidence type="ECO:0000255" key="1">
    <source>
        <dbReference type="HAMAP-Rule" id="MF_00386"/>
    </source>
</evidence>
<feature type="chain" id="PRO_0000171787" description="Putative membrane protein insertion efficiency factor">
    <location>
        <begin position="1"/>
        <end position="84"/>
    </location>
</feature>
<name>YIDD_NOSS1</name>